<feature type="signal peptide" evidence="2">
    <location>
        <begin position="1"/>
        <end position="35"/>
    </location>
</feature>
<feature type="chain" id="PRO_0000023802" description="Cytochrome f">
    <location>
        <begin position="36"/>
        <end position="320"/>
    </location>
</feature>
<feature type="transmembrane region" description="Helical" evidence="2">
    <location>
        <begin position="286"/>
        <end position="306"/>
    </location>
</feature>
<feature type="binding site" description="axial binding residue" evidence="2">
    <location>
        <position position="36"/>
    </location>
    <ligand>
        <name>heme</name>
        <dbReference type="ChEBI" id="CHEBI:30413"/>
    </ligand>
    <ligandPart>
        <name>Fe</name>
        <dbReference type="ChEBI" id="CHEBI:18248"/>
    </ligandPart>
</feature>
<feature type="binding site" description="covalent" evidence="2">
    <location>
        <position position="56"/>
    </location>
    <ligand>
        <name>heme</name>
        <dbReference type="ChEBI" id="CHEBI:30413"/>
    </ligand>
</feature>
<feature type="binding site" description="covalent" evidence="2">
    <location>
        <position position="59"/>
    </location>
    <ligand>
        <name>heme</name>
        <dbReference type="ChEBI" id="CHEBI:30413"/>
    </ligand>
</feature>
<feature type="binding site" description="axial binding residue" evidence="2">
    <location>
        <position position="60"/>
    </location>
    <ligand>
        <name>heme</name>
        <dbReference type="ChEBI" id="CHEBI:30413"/>
    </ligand>
    <ligandPart>
        <name>Fe</name>
        <dbReference type="ChEBI" id="CHEBI:18248"/>
    </ligandPart>
</feature>
<sequence length="320" mass="35314">MQNRNTFSWVKEQMTRSIFVSMMIYIITRASISNAYPIFAQQGYENPREATGRIVCANCHLANKPVDIEVPQAVLPDTVFEAVVRIPYDMQLKQVLANGKKGGLNVGAVLILPDGFELAPPDRISPAMKEKIGNLSFQSYRPTKKNILVIGPVPGQKYNEILFPILSPDPATKKEVHFLKYPIYVGGNRGRGQIYPDGSKSNNTVYNASASGIISRIIRKEKGGYEITIANALDGRQVVDIIPPGPELLVSEGESIKLDQPLTSNPNVGGFGQGDAEIVLQDPLRIQGLFLFLASVILAQIFLVLKKKQFEKVQLAEMNF</sequence>
<organism>
    <name type="scientific">Amborella trichopoda</name>
    <dbReference type="NCBI Taxonomy" id="13333"/>
    <lineage>
        <taxon>Eukaryota</taxon>
        <taxon>Viridiplantae</taxon>
        <taxon>Streptophyta</taxon>
        <taxon>Embryophyta</taxon>
        <taxon>Tracheophyta</taxon>
        <taxon>Spermatophyta</taxon>
        <taxon>Magnoliopsida</taxon>
        <taxon>Amborellales</taxon>
        <taxon>Amborellaceae</taxon>
        <taxon>Amborella</taxon>
    </lineage>
</organism>
<name>CYF_AMBTC</name>
<accession>Q70XZ0</accession>
<gene>
    <name evidence="2" type="primary">petA</name>
</gene>
<keyword id="KW-0150">Chloroplast</keyword>
<keyword id="KW-0249">Electron transport</keyword>
<keyword id="KW-0349">Heme</keyword>
<keyword id="KW-0408">Iron</keyword>
<keyword id="KW-0472">Membrane</keyword>
<keyword id="KW-0479">Metal-binding</keyword>
<keyword id="KW-0602">Photosynthesis</keyword>
<keyword id="KW-0934">Plastid</keyword>
<keyword id="KW-1185">Reference proteome</keyword>
<keyword id="KW-0732">Signal</keyword>
<keyword id="KW-0793">Thylakoid</keyword>
<keyword id="KW-0812">Transmembrane</keyword>
<keyword id="KW-1133">Transmembrane helix</keyword>
<keyword id="KW-0813">Transport</keyword>
<geneLocation type="chloroplast"/>
<dbReference type="EMBL" id="AJ506156">
    <property type="protein sequence ID" value="CAD45120.1"/>
    <property type="molecule type" value="Genomic_DNA"/>
</dbReference>
<dbReference type="RefSeq" id="NP_904112.1">
    <property type="nucleotide sequence ID" value="NC_005086.1"/>
</dbReference>
<dbReference type="SMR" id="Q70XZ0"/>
<dbReference type="STRING" id="13333.Q70XZ0"/>
<dbReference type="GeneID" id="2546616"/>
<dbReference type="KEGG" id="atr:2546616"/>
<dbReference type="eggNOG" id="ENOG502QPT8">
    <property type="taxonomic scope" value="Eukaryota"/>
</dbReference>
<dbReference type="OrthoDB" id="415867at2759"/>
<dbReference type="Proteomes" id="UP000017836">
    <property type="component" value="Chloroplast"/>
</dbReference>
<dbReference type="GO" id="GO:0009535">
    <property type="term" value="C:chloroplast thylakoid membrane"/>
    <property type="evidence" value="ECO:0007669"/>
    <property type="project" value="UniProtKB-SubCell"/>
</dbReference>
<dbReference type="GO" id="GO:0009055">
    <property type="term" value="F:electron transfer activity"/>
    <property type="evidence" value="ECO:0007669"/>
    <property type="project" value="UniProtKB-UniRule"/>
</dbReference>
<dbReference type="GO" id="GO:0020037">
    <property type="term" value="F:heme binding"/>
    <property type="evidence" value="ECO:0007669"/>
    <property type="project" value="InterPro"/>
</dbReference>
<dbReference type="GO" id="GO:0005506">
    <property type="term" value="F:iron ion binding"/>
    <property type="evidence" value="ECO:0007669"/>
    <property type="project" value="InterPro"/>
</dbReference>
<dbReference type="GO" id="GO:0015979">
    <property type="term" value="P:photosynthesis"/>
    <property type="evidence" value="ECO:0007669"/>
    <property type="project" value="UniProtKB-UniRule"/>
</dbReference>
<dbReference type="FunFam" id="1.20.5.700:FF:000001">
    <property type="entry name" value="Cytochrome f"/>
    <property type="match status" value="1"/>
</dbReference>
<dbReference type="FunFam" id="2.40.50.100:FF:000007">
    <property type="entry name" value="Cytochrome f"/>
    <property type="match status" value="1"/>
</dbReference>
<dbReference type="FunFam" id="2.60.40.830:FF:000001">
    <property type="entry name" value="Cytochrome f"/>
    <property type="match status" value="1"/>
</dbReference>
<dbReference type="Gene3D" id="2.40.50.100">
    <property type="match status" value="1"/>
</dbReference>
<dbReference type="Gene3D" id="2.60.40.830">
    <property type="entry name" value="Cytochrome f large domain"/>
    <property type="match status" value="1"/>
</dbReference>
<dbReference type="Gene3D" id="1.20.5.700">
    <property type="entry name" value="Single helix bin"/>
    <property type="match status" value="1"/>
</dbReference>
<dbReference type="HAMAP" id="MF_00610">
    <property type="entry name" value="Cytb6_f_cytF"/>
    <property type="match status" value="1"/>
</dbReference>
<dbReference type="InterPro" id="IPR024058">
    <property type="entry name" value="Cyt-f_TM"/>
</dbReference>
<dbReference type="InterPro" id="IPR002325">
    <property type="entry name" value="Cyt_f"/>
</dbReference>
<dbReference type="InterPro" id="IPR024094">
    <property type="entry name" value="Cyt_f_lg_dom"/>
</dbReference>
<dbReference type="InterPro" id="IPR036826">
    <property type="entry name" value="Cyt_f_lg_dom_sf"/>
</dbReference>
<dbReference type="InterPro" id="IPR011054">
    <property type="entry name" value="Rudment_hybrid_motif"/>
</dbReference>
<dbReference type="PANTHER" id="PTHR33288">
    <property type="match status" value="1"/>
</dbReference>
<dbReference type="PANTHER" id="PTHR33288:SF10">
    <property type="entry name" value="CYTOCHROME F"/>
    <property type="match status" value="1"/>
</dbReference>
<dbReference type="Pfam" id="PF01333">
    <property type="entry name" value="Apocytochr_F_C"/>
    <property type="match status" value="1"/>
</dbReference>
<dbReference type="Pfam" id="PF16639">
    <property type="entry name" value="Apocytochr_F_N"/>
    <property type="match status" value="1"/>
</dbReference>
<dbReference type="PRINTS" id="PR00610">
    <property type="entry name" value="CYTOCHROMEF"/>
</dbReference>
<dbReference type="SUPFAM" id="SSF103431">
    <property type="entry name" value="Cytochrome f subunit of the cytochrome b6f complex, transmembrane anchor"/>
    <property type="match status" value="1"/>
</dbReference>
<dbReference type="SUPFAM" id="SSF49441">
    <property type="entry name" value="Cytochrome f, large domain"/>
    <property type="match status" value="1"/>
</dbReference>
<dbReference type="SUPFAM" id="SSF51246">
    <property type="entry name" value="Rudiment single hybrid motif"/>
    <property type="match status" value="1"/>
</dbReference>
<dbReference type="PROSITE" id="PS51010">
    <property type="entry name" value="CYTF"/>
    <property type="match status" value="1"/>
</dbReference>
<evidence type="ECO:0000250" key="1"/>
<evidence type="ECO:0000255" key="2">
    <source>
        <dbReference type="HAMAP-Rule" id="MF_00610"/>
    </source>
</evidence>
<protein>
    <recommendedName>
        <fullName evidence="2">Cytochrome f</fullName>
    </recommendedName>
</protein>
<proteinExistence type="inferred from homology"/>
<reference key="1">
    <citation type="journal article" date="2003" name="Mol. Biol. Evol.">
        <title>Analysis of the Amborella trichopoda chloroplast genome sequence suggests that Amborella is not a basal angiosperm.</title>
        <authorList>
            <person name="Goremykin V.V."/>
            <person name="Hirsch-Ernst K.I."/>
            <person name="Wolfl S."/>
            <person name="Hellwig F.H."/>
        </authorList>
    </citation>
    <scope>NUCLEOTIDE SEQUENCE [LARGE SCALE GENOMIC DNA]</scope>
</reference>
<comment type="function">
    <text evidence="2">Component of the cytochrome b6-f complex, which mediates electron transfer between photosystem II (PSII) and photosystem I (PSI), cyclic electron flow around PSI, and state transitions.</text>
</comment>
<comment type="cofactor">
    <cofactor evidence="2">
        <name>heme</name>
        <dbReference type="ChEBI" id="CHEBI:30413"/>
    </cofactor>
    <text evidence="2">Binds 1 heme group covalently.</text>
</comment>
<comment type="subunit">
    <text evidence="1">The 4 large subunits of the cytochrome b6-f complex are cytochrome b6, subunit IV (17 kDa polypeptide, petD), cytochrome f and the Rieske protein, while the 4 small subunits are PetG, PetL, PetM and PetN. The complex functions as a dimer (By similarity).</text>
</comment>
<comment type="subcellular location">
    <subcellularLocation>
        <location evidence="2">Plastid</location>
        <location evidence="2">Chloroplast thylakoid membrane</location>
        <topology evidence="2">Single-pass membrane protein</topology>
    </subcellularLocation>
</comment>
<comment type="similarity">
    <text evidence="2">Belongs to the cytochrome f family.</text>
</comment>